<dbReference type="EMBL" id="CH916366">
    <property type="protein sequence ID" value="EDV96370.1"/>
    <property type="molecule type" value="Genomic_DNA"/>
</dbReference>
<dbReference type="SMR" id="B4IXD3"/>
<dbReference type="FunCoup" id="B4IXD3">
    <property type="interactions" value="1501"/>
</dbReference>
<dbReference type="STRING" id="7222.B4IXD3"/>
<dbReference type="EnsemblMetazoa" id="FBtr0151624">
    <property type="protein sequence ID" value="FBpp0150116"/>
    <property type="gene ID" value="FBgn0123681"/>
</dbReference>
<dbReference type="EnsemblMetazoa" id="XM_001983986.2">
    <property type="protein sequence ID" value="XP_001984022.1"/>
    <property type="gene ID" value="LOC6558174"/>
</dbReference>
<dbReference type="GeneID" id="6558174"/>
<dbReference type="KEGG" id="dgr:6558174"/>
<dbReference type="eggNOG" id="KOG3909">
    <property type="taxonomic scope" value="Eukaryota"/>
</dbReference>
<dbReference type="HOGENOM" id="CLU_037350_0_0_1"/>
<dbReference type="InParanoid" id="B4IXD3"/>
<dbReference type="OMA" id="VPHIAHD"/>
<dbReference type="OrthoDB" id="27601at2759"/>
<dbReference type="PhylomeDB" id="B4IXD3"/>
<dbReference type="Proteomes" id="UP000001070">
    <property type="component" value="Unassembled WGS sequence"/>
</dbReference>
<dbReference type="GO" id="GO:0005737">
    <property type="term" value="C:cytoplasm"/>
    <property type="evidence" value="ECO:0007669"/>
    <property type="project" value="UniProtKB-SubCell"/>
</dbReference>
<dbReference type="GO" id="GO:0046872">
    <property type="term" value="F:metal ion binding"/>
    <property type="evidence" value="ECO:0007669"/>
    <property type="project" value="UniProtKB-KW"/>
</dbReference>
<dbReference type="GO" id="GO:0008479">
    <property type="term" value="F:tRNA-guanosine(34) queuine transglycosylase activity"/>
    <property type="evidence" value="ECO:0007669"/>
    <property type="project" value="UniProtKB-UniRule"/>
</dbReference>
<dbReference type="GO" id="GO:0101030">
    <property type="term" value="P:tRNA-guanine transglycosylation"/>
    <property type="evidence" value="ECO:0007669"/>
    <property type="project" value="UniProtKB-UniRule"/>
</dbReference>
<dbReference type="Gene3D" id="3.20.20.105">
    <property type="entry name" value="Queuine tRNA-ribosyltransferase-like"/>
    <property type="match status" value="1"/>
</dbReference>
<dbReference type="HAMAP" id="MF_03043">
    <property type="entry name" value="QTRT2"/>
    <property type="match status" value="1"/>
</dbReference>
<dbReference type="InterPro" id="IPR028592">
    <property type="entry name" value="QTRTD1"/>
</dbReference>
<dbReference type="InterPro" id="IPR050852">
    <property type="entry name" value="Queuine_tRNA-ribosyltrfase"/>
</dbReference>
<dbReference type="InterPro" id="IPR036511">
    <property type="entry name" value="TGT-like_sf"/>
</dbReference>
<dbReference type="InterPro" id="IPR002616">
    <property type="entry name" value="tRNA_ribo_trans-like"/>
</dbReference>
<dbReference type="NCBIfam" id="TIGR00449">
    <property type="entry name" value="tgt_general"/>
    <property type="match status" value="1"/>
</dbReference>
<dbReference type="PANTHER" id="PTHR46064">
    <property type="entry name" value="QUEUINE TRNA-RIBOSYLTRANSFERASE ACCESSORY SUBUNIT 2"/>
    <property type="match status" value="1"/>
</dbReference>
<dbReference type="PANTHER" id="PTHR46064:SF1">
    <property type="entry name" value="QUEUINE TRNA-RIBOSYLTRANSFERASE ACCESSORY SUBUNIT 2"/>
    <property type="match status" value="1"/>
</dbReference>
<dbReference type="Pfam" id="PF01702">
    <property type="entry name" value="TGT"/>
    <property type="match status" value="1"/>
</dbReference>
<dbReference type="SUPFAM" id="SSF51713">
    <property type="entry name" value="tRNA-guanine transglycosylase"/>
    <property type="match status" value="1"/>
</dbReference>
<keyword id="KW-0963">Cytoplasm</keyword>
<keyword id="KW-0479">Metal-binding</keyword>
<keyword id="KW-1185">Reference proteome</keyword>
<keyword id="KW-0819">tRNA processing</keyword>
<keyword id="KW-0862">Zinc</keyword>
<protein>
    <recommendedName>
        <fullName evidence="1">Queuine tRNA-ribosyltransferase accessory subunit 2</fullName>
    </recommendedName>
    <alternativeName>
        <fullName evidence="1">Queuine tRNA-ribosyltransferase domain-containing protein 1</fullName>
    </alternativeName>
</protein>
<feature type="chain" id="PRO_0000383935" description="Queuine tRNA-ribosyltransferase accessory subunit 2">
    <location>
        <begin position="1"/>
        <end position="419"/>
    </location>
</feature>
<feature type="binding site" evidence="1">
    <location>
        <position position="326"/>
    </location>
    <ligand>
        <name>Zn(2+)</name>
        <dbReference type="ChEBI" id="CHEBI:29105"/>
    </ligand>
</feature>
<feature type="binding site" evidence="1">
    <location>
        <position position="328"/>
    </location>
    <ligand>
        <name>Zn(2+)</name>
        <dbReference type="ChEBI" id="CHEBI:29105"/>
    </ligand>
</feature>
<feature type="binding site" evidence="1">
    <location>
        <position position="331"/>
    </location>
    <ligand>
        <name>Zn(2+)</name>
        <dbReference type="ChEBI" id="CHEBI:29105"/>
    </ligand>
</feature>
<feature type="binding site" evidence="1">
    <location>
        <position position="357"/>
    </location>
    <ligand>
        <name>Zn(2+)</name>
        <dbReference type="ChEBI" id="CHEBI:29105"/>
    </ligand>
</feature>
<evidence type="ECO:0000255" key="1">
    <source>
        <dbReference type="HAMAP-Rule" id="MF_03043"/>
    </source>
</evidence>
<accession>B4IXD3</accession>
<proteinExistence type="inferred from homology"/>
<organism>
    <name type="scientific">Drosophila grimshawi</name>
    <name type="common">Hawaiian fruit fly</name>
    <name type="synonym">Idiomyia grimshawi</name>
    <dbReference type="NCBI Taxonomy" id="7222"/>
    <lineage>
        <taxon>Eukaryota</taxon>
        <taxon>Metazoa</taxon>
        <taxon>Ecdysozoa</taxon>
        <taxon>Arthropoda</taxon>
        <taxon>Hexapoda</taxon>
        <taxon>Insecta</taxon>
        <taxon>Pterygota</taxon>
        <taxon>Neoptera</taxon>
        <taxon>Endopterygota</taxon>
        <taxon>Diptera</taxon>
        <taxon>Brachycera</taxon>
        <taxon>Muscomorpha</taxon>
        <taxon>Ephydroidea</taxon>
        <taxon>Drosophilidae</taxon>
        <taxon>Drosophila</taxon>
        <taxon>Hawaiian Drosophila</taxon>
    </lineage>
</organism>
<sequence>MKFVIKSISKNSGRLGQLRIGKESNELQTPLLMQTTKGGSIPYLSGDVFDSVCKGQQQQQLLQLTLSTMDQMAESLVQWNRSLSEYVGLPGHATVLLLRDPCETTPAGGNDRDVVPLFTRRGKESLTATRYLELVSSFAPDVYQGLCDADTNPDSTKKRVQKSVDRTERFMEQCYERRVENSTLLAPIVGGYNTFARTQSIKHARQQPAGSYGGYILEGFHSNGLAATELKATQLLPIVEHCVQQLEEEQPRLMPGAYTPLLMLELIRQGIDIFDTSYAYCAAVNYKALSFSYKLDEIRPDDEHTPLLDMTAEEYKEQFKPLLSGCTCLACEKHTRAYHHHLYKTHELLGPILLMIHNLHHLMGFFDVIRASIGTDQLPALLEHLRMQNTSTEINYRIEPNNKIVTKAAMGKGFIAPAV</sequence>
<gene>
    <name type="ORF">GH16210</name>
</gene>
<comment type="function">
    <text evidence="1">Non-catalytic subunit of the queuine tRNA-ribosyltransferase (TGT) that catalyzes the base-exchange of a guanine (G) residue with queuine (Q) at position 34 (anticodon wobble position) in tRNAs with GU(N) anticodons (tRNA-Asp, -Asn, -His and -Tyr), resulting in the hypermodified nucleoside queuosine (7-(((4,5-cis-dihydroxy-2-cyclopenten-1-yl)amino)methyl)-7-deazaguanosine).</text>
</comment>
<comment type="cofactor">
    <cofactor evidence="1">
        <name>Zn(2+)</name>
        <dbReference type="ChEBI" id="CHEBI:29105"/>
    </cofactor>
    <text evidence="1">Binds 1 zinc ion per subunit.</text>
</comment>
<comment type="subunit">
    <text evidence="1">Heterodimer of a catalytic subunit and an accessory subunit.</text>
</comment>
<comment type="subcellular location">
    <subcellularLocation>
        <location evidence="1">Cytoplasm</location>
    </subcellularLocation>
</comment>
<comment type="similarity">
    <text evidence="1">Belongs to the queuine tRNA-ribosyltransferase family. QTRT2 subfamily.</text>
</comment>
<reference key="1">
    <citation type="journal article" date="2007" name="Nature">
        <title>Evolution of genes and genomes on the Drosophila phylogeny.</title>
        <authorList>
            <consortium name="Drosophila 12 genomes consortium"/>
        </authorList>
    </citation>
    <scope>NUCLEOTIDE SEQUENCE [LARGE SCALE GENOMIC DNA]</scope>
    <source>
        <strain>Tucson 15287-2541.00</strain>
    </source>
</reference>
<name>QTRT2_DROGR</name>